<reference key="1">
    <citation type="journal article" date="2001" name="J. Immunol.">
        <title>Molecular and immunological characterization of arginine kinase from the Indianmeal moth, Plodia interpunctella, a novel cross-reactive invertebrate pan-allergen.</title>
        <authorList>
            <person name="Binder M."/>
            <person name="Mahler V."/>
            <person name="Hayek B."/>
            <person name="Sperr W.R."/>
            <person name="Scholler M."/>
            <person name="Prozell S."/>
            <person name="Wiedermann G."/>
            <person name="Valent P."/>
            <person name="Valenta R."/>
            <person name="Duchene M."/>
        </authorList>
    </citation>
    <scope>NUCLEOTIDE SEQUENCE [MRNA]</scope>
</reference>
<proteinExistence type="evidence at protein level"/>
<name>KARG_PLOIN</name>
<sequence>MVDAATLEKLEAGFSKLAASDSKSLLKKYLTREVFDALKNKKTSFGSTLLDSIQSGVENLHSGVGIYAPDAEAYVVFADLFDPIIEDYHNGFKKTDKHPPKNWGDVETLGNLDPAGEFVVSTRVRCGRSMEGYPFNPCLTEAQYKEMEEKVSSTLSGLEGELKGTFFPLTGMSKETQQQLIDDHFLFKEGDRFLQAANACRFWPSGRGIYHNENKTFLVWCNEEDHLRLISMQMGGDLKQVYKRLVRGVNDIAKRIPFSHNERLGFLTFCPTNLGTTVRASVHIKLPKLAADKAKLEEVASKYHLQVRGTRGEHTEAEGGVYDISNKRRMGLTEYEAVKEMYDGIAELIKIEKSL</sequence>
<comment type="catalytic activity">
    <reaction>
        <text>L-arginine + ATP = N(omega)-phospho-L-arginine + ADP + H(+)</text>
        <dbReference type="Rhea" id="RHEA:22940"/>
        <dbReference type="ChEBI" id="CHEBI:15378"/>
        <dbReference type="ChEBI" id="CHEBI:30616"/>
        <dbReference type="ChEBI" id="CHEBI:32682"/>
        <dbReference type="ChEBI" id="CHEBI:58477"/>
        <dbReference type="ChEBI" id="CHEBI:456216"/>
        <dbReference type="EC" id="2.7.3.3"/>
    </reaction>
</comment>
<comment type="allergen">
    <text>Causes an allergic reaction in human.</text>
</comment>
<comment type="similarity">
    <text evidence="2 3">Belongs to the ATP:guanido phosphotransferase family.</text>
</comment>
<feature type="chain" id="PRO_0000211993" description="Arginine kinase">
    <location>
        <begin position="1"/>
        <end position="355"/>
    </location>
</feature>
<feature type="domain" description="Phosphagen kinase N-terminal" evidence="2">
    <location>
        <begin position="6"/>
        <end position="90"/>
    </location>
</feature>
<feature type="domain" description="Phosphagen kinase C-terminal" evidence="3">
    <location>
        <begin position="118"/>
        <end position="355"/>
    </location>
</feature>
<feature type="binding site" evidence="1">
    <location>
        <begin position="63"/>
        <end position="67"/>
    </location>
    <ligand>
        <name>substrate</name>
    </ligand>
</feature>
<feature type="binding site" evidence="3">
    <location>
        <begin position="121"/>
        <end position="125"/>
    </location>
    <ligand>
        <name>ATP</name>
        <dbReference type="ChEBI" id="CHEBI:30616"/>
    </ligand>
</feature>
<feature type="binding site" evidence="3">
    <location>
        <position position="184"/>
    </location>
    <ligand>
        <name>ATP</name>
        <dbReference type="ChEBI" id="CHEBI:30616"/>
    </ligand>
</feature>
<feature type="binding site" evidence="1">
    <location>
        <position position="224"/>
    </location>
    <ligand>
        <name>substrate</name>
    </ligand>
</feature>
<feature type="binding site" evidence="3">
    <location>
        <position position="228"/>
    </location>
    <ligand>
        <name>ATP</name>
        <dbReference type="ChEBI" id="CHEBI:30616"/>
    </ligand>
</feature>
<feature type="binding site" evidence="1">
    <location>
        <position position="270"/>
    </location>
    <ligand>
        <name>substrate</name>
    </ligand>
</feature>
<feature type="binding site" evidence="3">
    <location>
        <begin position="279"/>
        <end position="283"/>
    </location>
    <ligand>
        <name>ATP</name>
        <dbReference type="ChEBI" id="CHEBI:30616"/>
    </ligand>
</feature>
<feature type="binding site" evidence="3">
    <location>
        <begin position="308"/>
        <end position="313"/>
    </location>
    <ligand>
        <name>ATP</name>
        <dbReference type="ChEBI" id="CHEBI:30616"/>
    </ligand>
</feature>
<feature type="binding site" evidence="1">
    <location>
        <position position="313"/>
    </location>
    <ligand>
        <name>substrate</name>
    </ligand>
</feature>
<accession>Q95PM9</accession>
<dbReference type="EC" id="2.7.3.3"/>
<dbReference type="EMBL" id="AJ315030">
    <property type="protein sequence ID" value="CAC85911.1"/>
    <property type="molecule type" value="mRNA"/>
</dbReference>
<dbReference type="SMR" id="Q95PM9"/>
<dbReference type="Allergome" id="575">
    <property type="allergen name" value="Plo i 1"/>
</dbReference>
<dbReference type="Allergome" id="8301">
    <property type="allergen name" value="Plo i 1.0101"/>
</dbReference>
<dbReference type="GO" id="GO:0005615">
    <property type="term" value="C:extracellular space"/>
    <property type="evidence" value="ECO:0007669"/>
    <property type="project" value="TreeGrafter"/>
</dbReference>
<dbReference type="GO" id="GO:0004054">
    <property type="term" value="F:arginine kinase activity"/>
    <property type="evidence" value="ECO:0007669"/>
    <property type="project" value="UniProtKB-EC"/>
</dbReference>
<dbReference type="GO" id="GO:0005524">
    <property type="term" value="F:ATP binding"/>
    <property type="evidence" value="ECO:0007669"/>
    <property type="project" value="UniProtKB-KW"/>
</dbReference>
<dbReference type="GO" id="GO:0004111">
    <property type="term" value="F:creatine kinase activity"/>
    <property type="evidence" value="ECO:0007669"/>
    <property type="project" value="InterPro"/>
</dbReference>
<dbReference type="GO" id="GO:0046314">
    <property type="term" value="P:phosphocreatine biosynthetic process"/>
    <property type="evidence" value="ECO:0007669"/>
    <property type="project" value="InterPro"/>
</dbReference>
<dbReference type="CDD" id="cd07932">
    <property type="entry name" value="arginine_kinase_like"/>
    <property type="match status" value="1"/>
</dbReference>
<dbReference type="FunFam" id="3.30.590.10:FF:000006">
    <property type="entry name" value="Arginine kinase 1"/>
    <property type="match status" value="1"/>
</dbReference>
<dbReference type="FunFam" id="1.10.135.10:FF:000003">
    <property type="entry name" value="Three-domain arginine kinase"/>
    <property type="match status" value="1"/>
</dbReference>
<dbReference type="Gene3D" id="1.10.135.10">
    <property type="entry name" value="ATP:guanido phosphotransferase, N-terminal domain"/>
    <property type="match status" value="1"/>
</dbReference>
<dbReference type="Gene3D" id="3.30.590.10">
    <property type="entry name" value="Glutamine synthetase/guanido kinase, catalytic domain"/>
    <property type="match status" value="1"/>
</dbReference>
<dbReference type="InterPro" id="IPR000749">
    <property type="entry name" value="ATP-guanido_PTrfase"/>
</dbReference>
<dbReference type="InterPro" id="IPR022415">
    <property type="entry name" value="ATP-guanido_PTrfase_AS"/>
</dbReference>
<dbReference type="InterPro" id="IPR022414">
    <property type="entry name" value="ATP-guanido_PTrfase_cat"/>
</dbReference>
<dbReference type="InterPro" id="IPR022413">
    <property type="entry name" value="ATP-guanido_PTrfase_N"/>
</dbReference>
<dbReference type="InterPro" id="IPR036802">
    <property type="entry name" value="ATP-guanido_PTrfase_N_sf"/>
</dbReference>
<dbReference type="InterPro" id="IPR014746">
    <property type="entry name" value="Gln_synth/guanido_kin_cat_dom"/>
</dbReference>
<dbReference type="PANTHER" id="PTHR11547:SF38">
    <property type="entry name" value="ARGININE KINASE 1-RELATED"/>
    <property type="match status" value="1"/>
</dbReference>
<dbReference type="PANTHER" id="PTHR11547">
    <property type="entry name" value="ARGININE OR CREATINE KINASE"/>
    <property type="match status" value="1"/>
</dbReference>
<dbReference type="Pfam" id="PF00217">
    <property type="entry name" value="ATP-gua_Ptrans"/>
    <property type="match status" value="1"/>
</dbReference>
<dbReference type="Pfam" id="PF02807">
    <property type="entry name" value="ATP-gua_PtransN"/>
    <property type="match status" value="1"/>
</dbReference>
<dbReference type="SUPFAM" id="SSF55931">
    <property type="entry name" value="Glutamine synthetase/guanido kinase"/>
    <property type="match status" value="1"/>
</dbReference>
<dbReference type="SUPFAM" id="SSF48034">
    <property type="entry name" value="Guanido kinase N-terminal domain"/>
    <property type="match status" value="1"/>
</dbReference>
<dbReference type="PROSITE" id="PS00112">
    <property type="entry name" value="PHOSPHAGEN_KINASE"/>
    <property type="match status" value="1"/>
</dbReference>
<dbReference type="PROSITE" id="PS51510">
    <property type="entry name" value="PHOSPHAGEN_KINASE_C"/>
    <property type="match status" value="1"/>
</dbReference>
<dbReference type="PROSITE" id="PS51509">
    <property type="entry name" value="PHOSPHAGEN_KINASE_N"/>
    <property type="match status" value="1"/>
</dbReference>
<evidence type="ECO:0000250" key="1"/>
<evidence type="ECO:0000255" key="2">
    <source>
        <dbReference type="PROSITE-ProRule" id="PRU00842"/>
    </source>
</evidence>
<evidence type="ECO:0000255" key="3">
    <source>
        <dbReference type="PROSITE-ProRule" id="PRU00843"/>
    </source>
</evidence>
<organism>
    <name type="scientific">Plodia interpunctella</name>
    <name type="common">Indianmeal moth</name>
    <dbReference type="NCBI Taxonomy" id="58824"/>
    <lineage>
        <taxon>Eukaryota</taxon>
        <taxon>Metazoa</taxon>
        <taxon>Ecdysozoa</taxon>
        <taxon>Arthropoda</taxon>
        <taxon>Hexapoda</taxon>
        <taxon>Insecta</taxon>
        <taxon>Pterygota</taxon>
        <taxon>Neoptera</taxon>
        <taxon>Endopterygota</taxon>
        <taxon>Lepidoptera</taxon>
        <taxon>Glossata</taxon>
        <taxon>Ditrysia</taxon>
        <taxon>Pyraloidea</taxon>
        <taxon>Pyralidae</taxon>
        <taxon>Phycitinae</taxon>
        <taxon>Plodia</taxon>
    </lineage>
</organism>
<protein>
    <recommendedName>
        <fullName>Arginine kinase</fullName>
        <shortName>AK</shortName>
        <ecNumber>2.7.3.3</ecNumber>
    </recommendedName>
    <allergenName>Plo i 1</allergenName>
</protein>
<gene>
    <name type="primary">ARGK</name>
</gene>
<keyword id="KW-0020">Allergen</keyword>
<keyword id="KW-0067">ATP-binding</keyword>
<keyword id="KW-0418">Kinase</keyword>
<keyword id="KW-0547">Nucleotide-binding</keyword>
<keyword id="KW-0808">Transferase</keyword>